<comment type="function">
    <text evidence="1">Golgi membrane protein involved in vesicular trafficking.</text>
</comment>
<comment type="subcellular location">
    <subcellularLocation>
        <location evidence="1">Golgi apparatus membrane</location>
        <topology evidence="1">Multi-pass membrane protein</topology>
    </subcellularLocation>
</comment>
<comment type="similarity">
    <text evidence="3">Belongs to the TVP18 family.</text>
</comment>
<sequence>MTLKEEFQTRNFSIYGQWLGILSMILCFALGLSNMISSIFSLNIVIIAFSILAMVFSFVILFVEVPLLLRICPTSSSFDAAIRKISTNYMRAGAYGVMALVIWLSCISTRTSLIAAAVFLTLTGACYGLAGAKGQAFVGSKTLGGQGVAQMIV</sequence>
<reference key="1">
    <citation type="journal article" date="2008" name="Genome Biol.">
        <title>The genome sequence of the model ascomycete fungus Podospora anserina.</title>
        <authorList>
            <person name="Espagne E."/>
            <person name="Lespinet O."/>
            <person name="Malagnac F."/>
            <person name="Da Silva C."/>
            <person name="Jaillon O."/>
            <person name="Porcel B.M."/>
            <person name="Couloux A."/>
            <person name="Aury J.-M."/>
            <person name="Segurens B."/>
            <person name="Poulain J."/>
            <person name="Anthouard V."/>
            <person name="Grossetete S."/>
            <person name="Khalili H."/>
            <person name="Coppin E."/>
            <person name="Dequard-Chablat M."/>
            <person name="Picard M."/>
            <person name="Contamine V."/>
            <person name="Arnaise S."/>
            <person name="Bourdais A."/>
            <person name="Berteaux-Lecellier V."/>
            <person name="Gautheret D."/>
            <person name="de Vries R.P."/>
            <person name="Battaglia E."/>
            <person name="Coutinho P.M."/>
            <person name="Danchin E.G.J."/>
            <person name="Henrissat B."/>
            <person name="El Khoury R."/>
            <person name="Sainsard-Chanet A."/>
            <person name="Boivin A."/>
            <person name="Pinan-Lucarre B."/>
            <person name="Sellem C.H."/>
            <person name="Debuchy R."/>
            <person name="Wincker P."/>
            <person name="Weissenbach J."/>
            <person name="Silar P."/>
        </authorList>
    </citation>
    <scope>NUCLEOTIDE SEQUENCE [LARGE SCALE GENOMIC DNA]</scope>
    <source>
        <strain>S / ATCC MYA-4624 / DSM 980 / FGSC 10383</strain>
    </source>
</reference>
<reference key="2">
    <citation type="journal article" date="2014" name="Genetics">
        <title>Maintaining two mating types: Structure of the mating type locus and its role in heterokaryosis in Podospora anserina.</title>
        <authorList>
            <person name="Grognet P."/>
            <person name="Bidard F."/>
            <person name="Kuchly C."/>
            <person name="Tong L.C.H."/>
            <person name="Coppin E."/>
            <person name="Benkhali J.A."/>
            <person name="Couloux A."/>
            <person name="Wincker P."/>
            <person name="Debuchy R."/>
            <person name="Silar P."/>
        </authorList>
    </citation>
    <scope>GENOME REANNOTATION</scope>
    <source>
        <strain>S / ATCC MYA-4624 / DSM 980 / FGSC 10383</strain>
    </source>
</reference>
<proteinExistence type="inferred from homology"/>
<gene>
    <name type="primary">TVP18</name>
    <name type="ordered locus">Pa_4_8470</name>
    <name type="ORF">PODANS_4_8470</name>
</gene>
<feature type="chain" id="PRO_0000343028" description="Golgi apparatus membrane protein TVP18">
    <location>
        <begin position="1"/>
        <end position="153"/>
    </location>
</feature>
<feature type="transmembrane region" description="Helical" evidence="2">
    <location>
        <begin position="12"/>
        <end position="32"/>
    </location>
</feature>
<feature type="transmembrane region" description="Helical" evidence="2">
    <location>
        <begin position="44"/>
        <end position="64"/>
    </location>
</feature>
<feature type="transmembrane region" description="Helical" evidence="2">
    <location>
        <begin position="89"/>
        <end position="109"/>
    </location>
</feature>
<feature type="transmembrane region" description="Helical" evidence="2">
    <location>
        <begin position="112"/>
        <end position="132"/>
    </location>
</feature>
<feature type="glycosylation site" description="N-linked (GlcNAc...) asparagine" evidence="2">
    <location>
        <position position="11"/>
    </location>
</feature>
<keyword id="KW-0325">Glycoprotein</keyword>
<keyword id="KW-0333">Golgi apparatus</keyword>
<keyword id="KW-0472">Membrane</keyword>
<keyword id="KW-1185">Reference proteome</keyword>
<keyword id="KW-0812">Transmembrane</keyword>
<keyword id="KW-1133">Transmembrane helix</keyword>
<accession>B2AR67</accession>
<accession>A0A090CJ32</accession>
<evidence type="ECO:0000250" key="1"/>
<evidence type="ECO:0000255" key="2"/>
<evidence type="ECO:0000305" key="3"/>
<name>TVP18_PODAN</name>
<protein>
    <recommendedName>
        <fullName>Golgi apparatus membrane protein TVP18</fullName>
    </recommendedName>
</protein>
<dbReference type="EMBL" id="CU633895">
    <property type="protein sequence ID" value="CAP66645.1"/>
    <property type="molecule type" value="Genomic_DNA"/>
</dbReference>
<dbReference type="EMBL" id="FO904939">
    <property type="protein sequence ID" value="CDP28381.1"/>
    <property type="molecule type" value="Genomic_DNA"/>
</dbReference>
<dbReference type="RefSeq" id="XP_001905979.1">
    <property type="nucleotide sequence ID" value="XM_001905944.1"/>
</dbReference>
<dbReference type="FunCoup" id="B2AR67">
    <property type="interactions" value="38"/>
</dbReference>
<dbReference type="STRING" id="515849.B2AR67"/>
<dbReference type="GlyCosmos" id="B2AR67">
    <property type="glycosylation" value="1 site, No reported glycans"/>
</dbReference>
<dbReference type="GeneID" id="6190103"/>
<dbReference type="KEGG" id="pan:PODANSg3007"/>
<dbReference type="VEuPathDB" id="FungiDB:PODANS_4_8470"/>
<dbReference type="eggNOG" id="ENOG502S3AC">
    <property type="taxonomic scope" value="Eukaryota"/>
</dbReference>
<dbReference type="HOGENOM" id="CLU_118698_0_0_1"/>
<dbReference type="InParanoid" id="B2AR67"/>
<dbReference type="OrthoDB" id="5591789at2759"/>
<dbReference type="Proteomes" id="UP000001197">
    <property type="component" value="Chromosome 4"/>
</dbReference>
<dbReference type="GO" id="GO:0000139">
    <property type="term" value="C:Golgi membrane"/>
    <property type="evidence" value="ECO:0007669"/>
    <property type="project" value="UniProtKB-SubCell"/>
</dbReference>
<dbReference type="GO" id="GO:0016192">
    <property type="term" value="P:vesicle-mediated transport"/>
    <property type="evidence" value="ECO:0007669"/>
    <property type="project" value="TreeGrafter"/>
</dbReference>
<dbReference type="InterPro" id="IPR019365">
    <property type="entry name" value="TVP18/Ca-channel_flower"/>
</dbReference>
<dbReference type="PANTHER" id="PTHR13314">
    <property type="entry name" value="CALCIUM CHANNEL FLOWER HOMOLOG"/>
    <property type="match status" value="1"/>
</dbReference>
<dbReference type="PANTHER" id="PTHR13314:SF2">
    <property type="entry name" value="CALCIUM CHANNEL FLOWER HOMOLOG"/>
    <property type="match status" value="1"/>
</dbReference>
<dbReference type="Pfam" id="PF10233">
    <property type="entry name" value="Cg6151-P"/>
    <property type="match status" value="1"/>
</dbReference>
<dbReference type="SMART" id="SM01077">
    <property type="entry name" value="Cg6151-P"/>
    <property type="match status" value="1"/>
</dbReference>
<organism>
    <name type="scientific">Podospora anserina (strain S / ATCC MYA-4624 / DSM 980 / FGSC 10383)</name>
    <name type="common">Pleurage anserina</name>
    <dbReference type="NCBI Taxonomy" id="515849"/>
    <lineage>
        <taxon>Eukaryota</taxon>
        <taxon>Fungi</taxon>
        <taxon>Dikarya</taxon>
        <taxon>Ascomycota</taxon>
        <taxon>Pezizomycotina</taxon>
        <taxon>Sordariomycetes</taxon>
        <taxon>Sordariomycetidae</taxon>
        <taxon>Sordariales</taxon>
        <taxon>Podosporaceae</taxon>
        <taxon>Podospora</taxon>
        <taxon>Podospora anserina</taxon>
    </lineage>
</organism>